<sequence length="756" mass="82202">MGVPAGMPHPNGLQPQRKDKALAQNPNTPQKGSEAFLKKLIHSSWFFPGAAIVVMLGFLMASFFTQPSRQVDTNVGLQLLNDHQVKSAKIYDGDQRVELQLKDDYKKGNDNYGKSVRFYYVQPRGDEVAKAMESAELESYTDQPVEHSFLGSLVSLLLPILLFGVLFWFLMGRVGGGSSVMSFSKSRAKKFTKDKPEVRFSDVAGVDEALAELEEVREFLAEPEKFTRLGAKIPKGVLLYGPPGTGKTLLAKAVAGEAGVPFYSISGSDFVEMFVGVGASRVRDLFKEAKSDPAAIVFVDEIDAVGRRRGVGMGGGNDEREQTLNQLLVEMDGFDGNSNVIVIAATNRPDVLDPALLRPGRFDRQIGVDAPDMQGREHILRVHAAGKPIANTVDLAQVAKRTPGFTGADLANVMNEAALLTARDNGNVIDDRAIDEAIDRVMAGPQRSSRIMNEHERKVTAYHEGGHALVAAALRNSAPVTKITILPRGRALGYTMVMPQDDKYSTTRHELLDQMAYAMGGRAAEEIVFHDPSTGASNDIQKATDTARKMVTDYGMSAVIGSVKLGGEDTEPFLGGGGASARNYSDATAAKVDAEIRALLEQAHDEAFQILLENRDILDRLAFALLEKETLLENEIAEIFKDVRKRPEREHWYSKPTRERTDIPPVKAPSELAKEAEKSEEAPAEAPTVPVAPAAPAQQVPVAPTQPLPPQAPLTDPDADPTVAMPTQQYPNYPAPPEHRPENGTPNQNGAENERG</sequence>
<proteinExistence type="inferred from homology"/>
<protein>
    <recommendedName>
        <fullName evidence="1">ATP-dependent zinc metalloprotease FtsH</fullName>
        <ecNumber evidence="1">3.4.24.-</ecNumber>
    </recommendedName>
</protein>
<dbReference type="EC" id="3.4.24.-" evidence="1"/>
<dbReference type="EMBL" id="AP011540">
    <property type="protein sequence ID" value="BAI63983.1"/>
    <property type="molecule type" value="Genomic_DNA"/>
</dbReference>
<dbReference type="SMR" id="D2NQQ7"/>
<dbReference type="STRING" id="680646.RMDY18_01510"/>
<dbReference type="MEROPS" id="M41.015"/>
<dbReference type="KEGG" id="rmu:RMDY18_01510"/>
<dbReference type="eggNOG" id="COG0465">
    <property type="taxonomic scope" value="Bacteria"/>
</dbReference>
<dbReference type="HOGENOM" id="CLU_000688_23_2_11"/>
<dbReference type="Proteomes" id="UP000001883">
    <property type="component" value="Chromosome"/>
</dbReference>
<dbReference type="GO" id="GO:0005886">
    <property type="term" value="C:plasma membrane"/>
    <property type="evidence" value="ECO:0007669"/>
    <property type="project" value="UniProtKB-SubCell"/>
</dbReference>
<dbReference type="GO" id="GO:0005524">
    <property type="term" value="F:ATP binding"/>
    <property type="evidence" value="ECO:0007669"/>
    <property type="project" value="UniProtKB-UniRule"/>
</dbReference>
<dbReference type="GO" id="GO:0016887">
    <property type="term" value="F:ATP hydrolysis activity"/>
    <property type="evidence" value="ECO:0007669"/>
    <property type="project" value="UniProtKB-UniRule"/>
</dbReference>
<dbReference type="GO" id="GO:0004176">
    <property type="term" value="F:ATP-dependent peptidase activity"/>
    <property type="evidence" value="ECO:0007669"/>
    <property type="project" value="InterPro"/>
</dbReference>
<dbReference type="GO" id="GO:0004222">
    <property type="term" value="F:metalloendopeptidase activity"/>
    <property type="evidence" value="ECO:0007669"/>
    <property type="project" value="InterPro"/>
</dbReference>
<dbReference type="GO" id="GO:0008270">
    <property type="term" value="F:zinc ion binding"/>
    <property type="evidence" value="ECO:0007669"/>
    <property type="project" value="UniProtKB-UniRule"/>
</dbReference>
<dbReference type="GO" id="GO:0030163">
    <property type="term" value="P:protein catabolic process"/>
    <property type="evidence" value="ECO:0007669"/>
    <property type="project" value="UniProtKB-UniRule"/>
</dbReference>
<dbReference type="GO" id="GO:0006508">
    <property type="term" value="P:proteolysis"/>
    <property type="evidence" value="ECO:0007669"/>
    <property type="project" value="UniProtKB-KW"/>
</dbReference>
<dbReference type="CDD" id="cd19501">
    <property type="entry name" value="RecA-like_FtsH"/>
    <property type="match status" value="1"/>
</dbReference>
<dbReference type="FunFam" id="1.10.8.60:FF:000001">
    <property type="entry name" value="ATP-dependent zinc metalloprotease FtsH"/>
    <property type="match status" value="1"/>
</dbReference>
<dbReference type="FunFam" id="1.20.58.760:FF:000001">
    <property type="entry name" value="ATP-dependent zinc metalloprotease FtsH"/>
    <property type="match status" value="1"/>
</dbReference>
<dbReference type="FunFam" id="3.40.50.300:FF:000001">
    <property type="entry name" value="ATP-dependent zinc metalloprotease FtsH"/>
    <property type="match status" value="1"/>
</dbReference>
<dbReference type="Gene3D" id="1.10.8.60">
    <property type="match status" value="1"/>
</dbReference>
<dbReference type="Gene3D" id="3.40.50.300">
    <property type="entry name" value="P-loop containing nucleotide triphosphate hydrolases"/>
    <property type="match status" value="1"/>
</dbReference>
<dbReference type="Gene3D" id="1.20.58.760">
    <property type="entry name" value="Peptidase M41"/>
    <property type="match status" value="1"/>
</dbReference>
<dbReference type="HAMAP" id="MF_01458">
    <property type="entry name" value="FtsH"/>
    <property type="match status" value="1"/>
</dbReference>
<dbReference type="InterPro" id="IPR003593">
    <property type="entry name" value="AAA+_ATPase"/>
</dbReference>
<dbReference type="InterPro" id="IPR041569">
    <property type="entry name" value="AAA_lid_3"/>
</dbReference>
<dbReference type="InterPro" id="IPR003959">
    <property type="entry name" value="ATPase_AAA_core"/>
</dbReference>
<dbReference type="InterPro" id="IPR003960">
    <property type="entry name" value="ATPase_AAA_CS"/>
</dbReference>
<dbReference type="InterPro" id="IPR005936">
    <property type="entry name" value="FtsH"/>
</dbReference>
<dbReference type="InterPro" id="IPR027417">
    <property type="entry name" value="P-loop_NTPase"/>
</dbReference>
<dbReference type="InterPro" id="IPR011546">
    <property type="entry name" value="Pept_M41_FtsH_extracell"/>
</dbReference>
<dbReference type="InterPro" id="IPR000642">
    <property type="entry name" value="Peptidase_M41"/>
</dbReference>
<dbReference type="InterPro" id="IPR037219">
    <property type="entry name" value="Peptidase_M41-like"/>
</dbReference>
<dbReference type="NCBIfam" id="TIGR01241">
    <property type="entry name" value="FtsH_fam"/>
    <property type="match status" value="1"/>
</dbReference>
<dbReference type="PANTHER" id="PTHR23076:SF97">
    <property type="entry name" value="ATP-DEPENDENT ZINC METALLOPROTEASE YME1L1"/>
    <property type="match status" value="1"/>
</dbReference>
<dbReference type="PANTHER" id="PTHR23076">
    <property type="entry name" value="METALLOPROTEASE M41 FTSH"/>
    <property type="match status" value="1"/>
</dbReference>
<dbReference type="Pfam" id="PF00004">
    <property type="entry name" value="AAA"/>
    <property type="match status" value="1"/>
</dbReference>
<dbReference type="Pfam" id="PF17862">
    <property type="entry name" value="AAA_lid_3"/>
    <property type="match status" value="1"/>
</dbReference>
<dbReference type="Pfam" id="PF06480">
    <property type="entry name" value="FtsH_ext"/>
    <property type="match status" value="1"/>
</dbReference>
<dbReference type="Pfam" id="PF01434">
    <property type="entry name" value="Peptidase_M41"/>
    <property type="match status" value="1"/>
</dbReference>
<dbReference type="SMART" id="SM00382">
    <property type="entry name" value="AAA"/>
    <property type="match status" value="1"/>
</dbReference>
<dbReference type="SUPFAM" id="SSF140990">
    <property type="entry name" value="FtsH protease domain-like"/>
    <property type="match status" value="1"/>
</dbReference>
<dbReference type="SUPFAM" id="SSF52540">
    <property type="entry name" value="P-loop containing nucleoside triphosphate hydrolases"/>
    <property type="match status" value="1"/>
</dbReference>
<dbReference type="PROSITE" id="PS00674">
    <property type="entry name" value="AAA"/>
    <property type="match status" value="1"/>
</dbReference>
<comment type="function">
    <text evidence="1">Acts as a processive, ATP-dependent zinc metallopeptidase for both cytoplasmic and membrane proteins. Plays a role in the quality control of integral membrane proteins.</text>
</comment>
<comment type="cofactor">
    <cofactor evidence="1">
        <name>Zn(2+)</name>
        <dbReference type="ChEBI" id="CHEBI:29105"/>
    </cofactor>
    <text evidence="1">Binds 1 zinc ion per subunit.</text>
</comment>
<comment type="subunit">
    <text evidence="1">Homohexamer.</text>
</comment>
<comment type="subcellular location">
    <subcellularLocation>
        <location evidence="1">Cell membrane</location>
        <topology evidence="1">Multi-pass membrane protein</topology>
        <orientation evidence="1">Cytoplasmic side</orientation>
    </subcellularLocation>
</comment>
<comment type="similarity">
    <text evidence="1">In the central section; belongs to the AAA ATPase family.</text>
</comment>
<comment type="similarity">
    <text evidence="1">In the C-terminal section; belongs to the peptidase M41 family.</text>
</comment>
<reference key="1">
    <citation type="submission" date="2009-07" db="EMBL/GenBank/DDBJ databases">
        <title>Complete genome sequence of Rothia mucilaginosa DJ.</title>
        <authorList>
            <person name="Yamane K."/>
            <person name="Nambu T."/>
            <person name="Mashimo C."/>
            <person name="Sugimori C."/>
            <person name="Yamanaka T."/>
            <person name="Leung K."/>
            <person name="Fukushima H."/>
        </authorList>
    </citation>
    <scope>NUCLEOTIDE SEQUENCE [LARGE SCALE GENOMIC DNA]</scope>
    <source>
        <strain>DY-18</strain>
    </source>
</reference>
<keyword id="KW-0067">ATP-binding</keyword>
<keyword id="KW-1003">Cell membrane</keyword>
<keyword id="KW-0378">Hydrolase</keyword>
<keyword id="KW-0472">Membrane</keyword>
<keyword id="KW-0479">Metal-binding</keyword>
<keyword id="KW-0482">Metalloprotease</keyword>
<keyword id="KW-0547">Nucleotide-binding</keyword>
<keyword id="KW-0645">Protease</keyword>
<keyword id="KW-1185">Reference proteome</keyword>
<keyword id="KW-0812">Transmembrane</keyword>
<keyword id="KW-1133">Transmembrane helix</keyword>
<keyword id="KW-0862">Zinc</keyword>
<evidence type="ECO:0000255" key="1">
    <source>
        <dbReference type="HAMAP-Rule" id="MF_01458"/>
    </source>
</evidence>
<evidence type="ECO:0000256" key="2">
    <source>
        <dbReference type="SAM" id="MobiDB-lite"/>
    </source>
</evidence>
<gene>
    <name evidence="1" type="primary">ftsH</name>
    <name type="ordered locus">RMDY18_01510</name>
</gene>
<accession>D2NQQ7</accession>
<feature type="chain" id="PRO_0000400386" description="ATP-dependent zinc metalloprotease FtsH">
    <location>
        <begin position="1"/>
        <end position="756"/>
    </location>
</feature>
<feature type="topological domain" description="Cytoplasmic" evidence="1">
    <location>
        <begin position="1"/>
        <end position="44"/>
    </location>
</feature>
<feature type="transmembrane region" description="Helical" evidence="1">
    <location>
        <begin position="45"/>
        <end position="65"/>
    </location>
</feature>
<feature type="topological domain" description="Extracellular" evidence="1">
    <location>
        <begin position="66"/>
        <end position="148"/>
    </location>
</feature>
<feature type="transmembrane region" description="Helical" evidence="1">
    <location>
        <begin position="149"/>
        <end position="169"/>
    </location>
</feature>
<feature type="topological domain" description="Cytoplasmic" evidence="1">
    <location>
        <begin position="170"/>
        <end position="756"/>
    </location>
</feature>
<feature type="region of interest" description="Disordered" evidence="2">
    <location>
        <begin position="647"/>
        <end position="756"/>
    </location>
</feature>
<feature type="compositionally biased region" description="Basic and acidic residues" evidence="2">
    <location>
        <begin position="647"/>
        <end position="662"/>
    </location>
</feature>
<feature type="compositionally biased region" description="Basic and acidic residues" evidence="2">
    <location>
        <begin position="672"/>
        <end position="681"/>
    </location>
</feature>
<feature type="compositionally biased region" description="Low complexity" evidence="2">
    <location>
        <begin position="684"/>
        <end position="703"/>
    </location>
</feature>
<feature type="compositionally biased region" description="Low complexity" evidence="2">
    <location>
        <begin position="713"/>
        <end position="724"/>
    </location>
</feature>
<feature type="compositionally biased region" description="Polar residues" evidence="2">
    <location>
        <begin position="744"/>
        <end position="756"/>
    </location>
</feature>
<feature type="active site" evidence="1">
    <location>
        <position position="464"/>
    </location>
</feature>
<feature type="binding site" evidence="1">
    <location>
        <begin position="241"/>
        <end position="248"/>
    </location>
    <ligand>
        <name>ATP</name>
        <dbReference type="ChEBI" id="CHEBI:30616"/>
    </ligand>
</feature>
<feature type="binding site" evidence="1">
    <location>
        <position position="463"/>
    </location>
    <ligand>
        <name>Zn(2+)</name>
        <dbReference type="ChEBI" id="CHEBI:29105"/>
        <note>catalytic</note>
    </ligand>
</feature>
<feature type="binding site" evidence="1">
    <location>
        <position position="467"/>
    </location>
    <ligand>
        <name>Zn(2+)</name>
        <dbReference type="ChEBI" id="CHEBI:29105"/>
        <note>catalytic</note>
    </ligand>
</feature>
<feature type="binding site" evidence="1">
    <location>
        <position position="539"/>
    </location>
    <ligand>
        <name>Zn(2+)</name>
        <dbReference type="ChEBI" id="CHEBI:29105"/>
        <note>catalytic</note>
    </ligand>
</feature>
<name>FTSH_ROTMD</name>
<organism>
    <name type="scientific">Rothia mucilaginosa (strain DY-18)</name>
    <name type="common">Stomatococcus mucilaginosus</name>
    <dbReference type="NCBI Taxonomy" id="680646"/>
    <lineage>
        <taxon>Bacteria</taxon>
        <taxon>Bacillati</taxon>
        <taxon>Actinomycetota</taxon>
        <taxon>Actinomycetes</taxon>
        <taxon>Micrococcales</taxon>
        <taxon>Micrococcaceae</taxon>
        <taxon>Rothia</taxon>
    </lineage>
</organism>